<reference key="1">
    <citation type="journal article" date="2000" name="Nature">
        <title>Complete genome sequence of Pseudomonas aeruginosa PAO1, an opportunistic pathogen.</title>
        <authorList>
            <person name="Stover C.K."/>
            <person name="Pham X.-Q.T."/>
            <person name="Erwin A.L."/>
            <person name="Mizoguchi S.D."/>
            <person name="Warrener P."/>
            <person name="Hickey M.J."/>
            <person name="Brinkman F.S.L."/>
            <person name="Hufnagle W.O."/>
            <person name="Kowalik D.J."/>
            <person name="Lagrou M."/>
            <person name="Garber R.L."/>
            <person name="Goltry L."/>
            <person name="Tolentino E."/>
            <person name="Westbrock-Wadman S."/>
            <person name="Yuan Y."/>
            <person name="Brody L.L."/>
            <person name="Coulter S.N."/>
            <person name="Folger K.R."/>
            <person name="Kas A."/>
            <person name="Larbig K."/>
            <person name="Lim R.M."/>
            <person name="Smith K.A."/>
            <person name="Spencer D.H."/>
            <person name="Wong G.K.-S."/>
            <person name="Wu Z."/>
            <person name="Paulsen I.T."/>
            <person name="Reizer J."/>
            <person name="Saier M.H. Jr."/>
            <person name="Hancock R.E.W."/>
            <person name="Lory S."/>
            <person name="Olson M.V."/>
        </authorList>
    </citation>
    <scope>NUCLEOTIDE SEQUENCE [LARGE SCALE GENOMIC DNA]</scope>
    <source>
        <strain>ATCC 15692 / DSM 22644 / CIP 104116 / JCM 14847 / LMG 12228 / 1C / PRS 101 / PAO1</strain>
    </source>
</reference>
<keyword id="KW-0963">Cytoplasm</keyword>
<keyword id="KW-0269">Exonuclease</keyword>
<keyword id="KW-0378">Hydrolase</keyword>
<keyword id="KW-0540">Nuclease</keyword>
<keyword id="KW-1185">Reference proteome</keyword>
<gene>
    <name evidence="1" type="primary">xseB</name>
    <name type="ordered locus">PA4042</name>
</gene>
<feature type="chain" id="PRO_0000206988" description="Exodeoxyribonuclease 7 small subunit">
    <location>
        <begin position="1"/>
        <end position="80"/>
    </location>
</feature>
<proteinExistence type="inferred from homology"/>
<comment type="function">
    <text evidence="1">Bidirectionally degrades single-stranded DNA into large acid-insoluble oligonucleotides, which are then degraded further into small acid-soluble oligonucleotides.</text>
</comment>
<comment type="catalytic activity">
    <reaction evidence="1">
        <text>Exonucleolytic cleavage in either 5'- to 3'- or 3'- to 5'-direction to yield nucleoside 5'-phosphates.</text>
        <dbReference type="EC" id="3.1.11.6"/>
    </reaction>
</comment>
<comment type="subunit">
    <text evidence="1">Heterooligomer composed of large and small subunits.</text>
</comment>
<comment type="subcellular location">
    <subcellularLocation>
        <location evidence="1">Cytoplasm</location>
    </subcellularLocation>
</comment>
<comment type="similarity">
    <text evidence="1 2">Belongs to the XseB family.</text>
</comment>
<name>EX7S_PSEAE</name>
<dbReference type="EC" id="3.1.11.6" evidence="1"/>
<dbReference type="EMBL" id="AE004091">
    <property type="protein sequence ID" value="AAG07429.1"/>
    <property type="molecule type" value="Genomic_DNA"/>
</dbReference>
<dbReference type="PIR" id="E83139">
    <property type="entry name" value="E83139"/>
</dbReference>
<dbReference type="RefSeq" id="NP_252731.1">
    <property type="nucleotide sequence ID" value="NC_002516.2"/>
</dbReference>
<dbReference type="RefSeq" id="WP_003093283.1">
    <property type="nucleotide sequence ID" value="NZ_QZGE01000013.1"/>
</dbReference>
<dbReference type="SMR" id="Q9HWY5"/>
<dbReference type="FunCoup" id="Q9HWY5">
    <property type="interactions" value="419"/>
</dbReference>
<dbReference type="STRING" id="208964.PA4042"/>
<dbReference type="PaxDb" id="208964-PA4042"/>
<dbReference type="DNASU" id="879057"/>
<dbReference type="GeneID" id="879057"/>
<dbReference type="KEGG" id="pae:PA4042"/>
<dbReference type="PATRIC" id="fig|208964.12.peg.4233"/>
<dbReference type="PseudoCAP" id="PA4042"/>
<dbReference type="HOGENOM" id="CLU_145918_3_3_6"/>
<dbReference type="InParanoid" id="Q9HWY5"/>
<dbReference type="OrthoDB" id="9801128at2"/>
<dbReference type="PhylomeDB" id="Q9HWY5"/>
<dbReference type="BioCyc" id="PAER208964:G1FZ6-4115-MONOMER"/>
<dbReference type="Proteomes" id="UP000002438">
    <property type="component" value="Chromosome"/>
</dbReference>
<dbReference type="GO" id="GO:0005829">
    <property type="term" value="C:cytosol"/>
    <property type="evidence" value="ECO:0000318"/>
    <property type="project" value="GO_Central"/>
</dbReference>
<dbReference type="GO" id="GO:0009318">
    <property type="term" value="C:exodeoxyribonuclease VII complex"/>
    <property type="evidence" value="ECO:0007669"/>
    <property type="project" value="InterPro"/>
</dbReference>
<dbReference type="GO" id="GO:0008855">
    <property type="term" value="F:exodeoxyribonuclease VII activity"/>
    <property type="evidence" value="ECO:0000318"/>
    <property type="project" value="GO_Central"/>
</dbReference>
<dbReference type="GO" id="GO:0006308">
    <property type="term" value="P:DNA catabolic process"/>
    <property type="evidence" value="ECO:0007669"/>
    <property type="project" value="UniProtKB-UniRule"/>
</dbReference>
<dbReference type="FunFam" id="1.10.287.1040:FF:000011">
    <property type="entry name" value="Exodeoxyribonuclease 7 small subunit"/>
    <property type="match status" value="1"/>
</dbReference>
<dbReference type="Gene3D" id="1.10.287.1040">
    <property type="entry name" value="Exonuclease VII, small subunit"/>
    <property type="match status" value="1"/>
</dbReference>
<dbReference type="HAMAP" id="MF_00337">
    <property type="entry name" value="Exonuc_7_S"/>
    <property type="match status" value="1"/>
</dbReference>
<dbReference type="InterPro" id="IPR003761">
    <property type="entry name" value="Exonuc_VII_S"/>
</dbReference>
<dbReference type="InterPro" id="IPR037004">
    <property type="entry name" value="Exonuc_VII_ssu_sf"/>
</dbReference>
<dbReference type="NCBIfam" id="NF002140">
    <property type="entry name" value="PRK00977.1-4"/>
    <property type="match status" value="1"/>
</dbReference>
<dbReference type="NCBIfam" id="TIGR01280">
    <property type="entry name" value="xseB"/>
    <property type="match status" value="1"/>
</dbReference>
<dbReference type="PANTHER" id="PTHR34137">
    <property type="entry name" value="EXODEOXYRIBONUCLEASE 7 SMALL SUBUNIT"/>
    <property type="match status" value="1"/>
</dbReference>
<dbReference type="PANTHER" id="PTHR34137:SF1">
    <property type="entry name" value="EXODEOXYRIBONUCLEASE 7 SMALL SUBUNIT"/>
    <property type="match status" value="1"/>
</dbReference>
<dbReference type="Pfam" id="PF02609">
    <property type="entry name" value="Exonuc_VII_S"/>
    <property type="match status" value="1"/>
</dbReference>
<dbReference type="PIRSF" id="PIRSF006488">
    <property type="entry name" value="Exonuc_VII_S"/>
    <property type="match status" value="1"/>
</dbReference>
<dbReference type="SUPFAM" id="SSF116842">
    <property type="entry name" value="XseB-like"/>
    <property type="match status" value="1"/>
</dbReference>
<evidence type="ECO:0000255" key="1">
    <source>
        <dbReference type="HAMAP-Rule" id="MF_00337"/>
    </source>
</evidence>
<evidence type="ECO:0000305" key="2"/>
<organism>
    <name type="scientific">Pseudomonas aeruginosa (strain ATCC 15692 / DSM 22644 / CIP 104116 / JCM 14847 / LMG 12228 / 1C / PRS 101 / PAO1)</name>
    <dbReference type="NCBI Taxonomy" id="208964"/>
    <lineage>
        <taxon>Bacteria</taxon>
        <taxon>Pseudomonadati</taxon>
        <taxon>Pseudomonadota</taxon>
        <taxon>Gammaproteobacteria</taxon>
        <taxon>Pseudomonadales</taxon>
        <taxon>Pseudomonadaceae</taxon>
        <taxon>Pseudomonas</taxon>
    </lineage>
</organism>
<accession>Q9HWY5</accession>
<protein>
    <recommendedName>
        <fullName evidence="1">Exodeoxyribonuclease 7 small subunit</fullName>
        <ecNumber evidence="1">3.1.11.6</ecNumber>
    </recommendedName>
    <alternativeName>
        <fullName evidence="1">Exodeoxyribonuclease VII small subunit</fullName>
        <shortName evidence="1">Exonuclease VII small subunit</shortName>
    </alternativeName>
</protein>
<sequence>MARKKTLDFEQSLTELQTLVERLESGELSLEESLGAFEQGIRLTRECQTSLSQAEQKVQILLERDGELSEAPFDAEGDEA</sequence>